<evidence type="ECO:0000255" key="1">
    <source>
        <dbReference type="HAMAP-Rule" id="MF_00185"/>
    </source>
</evidence>
<comment type="function">
    <text evidence="1">Catalyzes the transfer of a dimethylallyl group onto the adenine at position 37 in tRNAs that read codons beginning with uridine, leading to the formation of N6-(dimethylallyl)adenosine (i(6)A).</text>
</comment>
<comment type="catalytic activity">
    <reaction evidence="1">
        <text>adenosine(37) in tRNA + dimethylallyl diphosphate = N(6)-dimethylallyladenosine(37) in tRNA + diphosphate</text>
        <dbReference type="Rhea" id="RHEA:26482"/>
        <dbReference type="Rhea" id="RHEA-COMP:10162"/>
        <dbReference type="Rhea" id="RHEA-COMP:10375"/>
        <dbReference type="ChEBI" id="CHEBI:33019"/>
        <dbReference type="ChEBI" id="CHEBI:57623"/>
        <dbReference type="ChEBI" id="CHEBI:74411"/>
        <dbReference type="ChEBI" id="CHEBI:74415"/>
        <dbReference type="EC" id="2.5.1.75"/>
    </reaction>
</comment>
<comment type="cofactor">
    <cofactor evidence="1">
        <name>Mg(2+)</name>
        <dbReference type="ChEBI" id="CHEBI:18420"/>
    </cofactor>
</comment>
<comment type="subunit">
    <text evidence="1">Monomer.</text>
</comment>
<comment type="similarity">
    <text evidence="1">Belongs to the IPP transferase family.</text>
</comment>
<proteinExistence type="inferred from homology"/>
<gene>
    <name evidence="1" type="primary">miaA</name>
    <name type="ordered locus">BMA10247_2193</name>
</gene>
<keyword id="KW-0067">ATP-binding</keyword>
<keyword id="KW-0460">Magnesium</keyword>
<keyword id="KW-0547">Nucleotide-binding</keyword>
<keyword id="KW-0808">Transferase</keyword>
<keyword id="KW-0819">tRNA processing</keyword>
<organism>
    <name type="scientific">Burkholderia mallei (strain NCTC 10247)</name>
    <dbReference type="NCBI Taxonomy" id="320389"/>
    <lineage>
        <taxon>Bacteria</taxon>
        <taxon>Pseudomonadati</taxon>
        <taxon>Pseudomonadota</taxon>
        <taxon>Betaproteobacteria</taxon>
        <taxon>Burkholderiales</taxon>
        <taxon>Burkholderiaceae</taxon>
        <taxon>Burkholderia</taxon>
        <taxon>pseudomallei group</taxon>
    </lineage>
</organism>
<accession>A3MN86</accession>
<reference key="1">
    <citation type="journal article" date="2010" name="Genome Biol. Evol.">
        <title>Continuing evolution of Burkholderia mallei through genome reduction and large-scale rearrangements.</title>
        <authorList>
            <person name="Losada L."/>
            <person name="Ronning C.M."/>
            <person name="DeShazer D."/>
            <person name="Woods D."/>
            <person name="Fedorova N."/>
            <person name="Kim H.S."/>
            <person name="Shabalina S.A."/>
            <person name="Pearson T.R."/>
            <person name="Brinkac L."/>
            <person name="Tan P."/>
            <person name="Nandi T."/>
            <person name="Crabtree J."/>
            <person name="Badger J."/>
            <person name="Beckstrom-Sternberg S."/>
            <person name="Saqib M."/>
            <person name="Schutzer S.E."/>
            <person name="Keim P."/>
            <person name="Nierman W.C."/>
        </authorList>
    </citation>
    <scope>NUCLEOTIDE SEQUENCE [LARGE SCALE GENOMIC DNA]</scope>
    <source>
        <strain>NCTC 10247</strain>
    </source>
</reference>
<name>MIAA_BURM7</name>
<protein>
    <recommendedName>
        <fullName evidence="1">tRNA dimethylallyltransferase</fullName>
        <ecNumber evidence="1">2.5.1.75</ecNumber>
    </recommendedName>
    <alternativeName>
        <fullName evidence="1">Dimethylallyl diphosphate:tRNA dimethylallyltransferase</fullName>
        <shortName evidence="1">DMAPP:tRNA dimethylallyltransferase</shortName>
        <shortName evidence="1">DMATase</shortName>
    </alternativeName>
    <alternativeName>
        <fullName evidence="1">Isopentenyl-diphosphate:tRNA isopentenyltransferase</fullName>
        <shortName evidence="1">IPP transferase</shortName>
        <shortName evidence="1">IPPT</shortName>
        <shortName evidence="1">IPTase</shortName>
    </alternativeName>
</protein>
<sequence length="324" mass="35095">MSERNAASARTVACLLGPTASGKTAAALALAARRPIEIVSVDSALVYRGMDIGTAKPTRDERAAVPHHLIDIVDPADAYSAAEFRADALRLVAQIAARGRTPLLAGGTMLYYRALTQGLNDLPAADPDVRATLDADAARDGWPALHARLAGIDPATAARLAPNDSQRIQRALEVYLLTGQPMSALLAAPPRDNDAAAGLRFVPVALEPSERAVLHARIAARFDAMLEAGFIDEVERLRRRDDLHLGLPSMRCVGYRQAWEYLDGCTDYRTMRDKGIFATRQLCKRQLTWLRAMPERIVVDCCAPDATVRAVDALERVLDGRAPA</sequence>
<feature type="chain" id="PRO_1000020573" description="tRNA dimethylallyltransferase">
    <location>
        <begin position="1"/>
        <end position="324"/>
    </location>
</feature>
<feature type="region of interest" description="Interaction with substrate tRNA" evidence="1">
    <location>
        <begin position="42"/>
        <end position="45"/>
    </location>
</feature>
<feature type="region of interest" description="Interaction with substrate tRNA" evidence="1">
    <location>
        <begin position="166"/>
        <end position="170"/>
    </location>
</feature>
<feature type="region of interest" description="Interaction with substrate tRNA" evidence="1">
    <location>
        <begin position="251"/>
        <end position="256"/>
    </location>
</feature>
<feature type="binding site" evidence="1">
    <location>
        <begin position="17"/>
        <end position="24"/>
    </location>
    <ligand>
        <name>ATP</name>
        <dbReference type="ChEBI" id="CHEBI:30616"/>
    </ligand>
</feature>
<feature type="binding site" evidence="1">
    <location>
        <begin position="19"/>
        <end position="24"/>
    </location>
    <ligand>
        <name>substrate</name>
    </ligand>
</feature>
<feature type="site" description="Interaction with substrate tRNA" evidence="1">
    <location>
        <position position="108"/>
    </location>
</feature>
<feature type="site" description="Interaction with substrate tRNA" evidence="1">
    <location>
        <position position="130"/>
    </location>
</feature>
<dbReference type="EC" id="2.5.1.75" evidence="1"/>
<dbReference type="EMBL" id="CP000548">
    <property type="protein sequence ID" value="ABO04364.1"/>
    <property type="molecule type" value="Genomic_DNA"/>
</dbReference>
<dbReference type="RefSeq" id="WP_004194103.1">
    <property type="nucleotide sequence ID" value="NZ_CP007802.1"/>
</dbReference>
<dbReference type="SMR" id="A3MN86"/>
<dbReference type="GeneID" id="92980007"/>
<dbReference type="KEGG" id="bmaz:BM44_1047"/>
<dbReference type="KEGG" id="bmn:BMA10247_2193"/>
<dbReference type="PATRIC" id="fig|320389.8.peg.1169"/>
<dbReference type="GO" id="GO:0005524">
    <property type="term" value="F:ATP binding"/>
    <property type="evidence" value="ECO:0007669"/>
    <property type="project" value="UniProtKB-UniRule"/>
</dbReference>
<dbReference type="GO" id="GO:0052381">
    <property type="term" value="F:tRNA dimethylallyltransferase activity"/>
    <property type="evidence" value="ECO:0007669"/>
    <property type="project" value="UniProtKB-UniRule"/>
</dbReference>
<dbReference type="GO" id="GO:0006400">
    <property type="term" value="P:tRNA modification"/>
    <property type="evidence" value="ECO:0007669"/>
    <property type="project" value="TreeGrafter"/>
</dbReference>
<dbReference type="FunFam" id="1.10.20.140:FF:000001">
    <property type="entry name" value="tRNA dimethylallyltransferase"/>
    <property type="match status" value="1"/>
</dbReference>
<dbReference type="Gene3D" id="1.10.20.140">
    <property type="match status" value="1"/>
</dbReference>
<dbReference type="Gene3D" id="3.40.50.300">
    <property type="entry name" value="P-loop containing nucleotide triphosphate hydrolases"/>
    <property type="match status" value="1"/>
</dbReference>
<dbReference type="HAMAP" id="MF_00185">
    <property type="entry name" value="IPP_trans"/>
    <property type="match status" value="1"/>
</dbReference>
<dbReference type="InterPro" id="IPR039657">
    <property type="entry name" value="Dimethylallyltransferase"/>
</dbReference>
<dbReference type="InterPro" id="IPR018022">
    <property type="entry name" value="IPT"/>
</dbReference>
<dbReference type="InterPro" id="IPR027417">
    <property type="entry name" value="P-loop_NTPase"/>
</dbReference>
<dbReference type="NCBIfam" id="TIGR00174">
    <property type="entry name" value="miaA"/>
    <property type="match status" value="1"/>
</dbReference>
<dbReference type="PANTHER" id="PTHR11088">
    <property type="entry name" value="TRNA DIMETHYLALLYLTRANSFERASE"/>
    <property type="match status" value="1"/>
</dbReference>
<dbReference type="PANTHER" id="PTHR11088:SF60">
    <property type="entry name" value="TRNA DIMETHYLALLYLTRANSFERASE"/>
    <property type="match status" value="1"/>
</dbReference>
<dbReference type="Pfam" id="PF01715">
    <property type="entry name" value="IPPT"/>
    <property type="match status" value="1"/>
</dbReference>
<dbReference type="SUPFAM" id="SSF52540">
    <property type="entry name" value="P-loop containing nucleoside triphosphate hydrolases"/>
    <property type="match status" value="2"/>
</dbReference>